<evidence type="ECO:0000255" key="1">
    <source>
        <dbReference type="HAMAP-Rule" id="MF_00020"/>
    </source>
</evidence>
<feature type="chain" id="PRO_1000002247" description="Acetate kinase">
    <location>
        <begin position="1"/>
        <end position="394"/>
    </location>
</feature>
<feature type="active site" description="Proton donor/acceptor" evidence="1">
    <location>
        <position position="144"/>
    </location>
</feature>
<feature type="binding site" evidence="1">
    <location>
        <position position="10"/>
    </location>
    <ligand>
        <name>Mg(2+)</name>
        <dbReference type="ChEBI" id="CHEBI:18420"/>
    </ligand>
</feature>
<feature type="binding site" evidence="1">
    <location>
        <position position="17"/>
    </location>
    <ligand>
        <name>ATP</name>
        <dbReference type="ChEBI" id="CHEBI:30616"/>
    </ligand>
</feature>
<feature type="binding site" evidence="1">
    <location>
        <position position="87"/>
    </location>
    <ligand>
        <name>substrate</name>
    </ligand>
</feature>
<feature type="binding site" evidence="1">
    <location>
        <begin position="204"/>
        <end position="208"/>
    </location>
    <ligand>
        <name>ATP</name>
        <dbReference type="ChEBI" id="CHEBI:30616"/>
    </ligand>
</feature>
<feature type="binding site" evidence="1">
    <location>
        <begin position="279"/>
        <end position="281"/>
    </location>
    <ligand>
        <name>ATP</name>
        <dbReference type="ChEBI" id="CHEBI:30616"/>
    </ligand>
</feature>
<feature type="binding site" evidence="1">
    <location>
        <begin position="327"/>
        <end position="331"/>
    </location>
    <ligand>
        <name>ATP</name>
        <dbReference type="ChEBI" id="CHEBI:30616"/>
    </ligand>
</feature>
<feature type="binding site" evidence="1">
    <location>
        <position position="381"/>
    </location>
    <ligand>
        <name>Mg(2+)</name>
        <dbReference type="ChEBI" id="CHEBI:18420"/>
    </ligand>
</feature>
<feature type="site" description="Transition state stabilizer" evidence="1">
    <location>
        <position position="176"/>
    </location>
</feature>
<feature type="site" description="Transition state stabilizer" evidence="1">
    <location>
        <position position="237"/>
    </location>
</feature>
<sequence>MPSRNILVINCGSSSIKFALVNEAHSLFPLHGLAERLGSRDAVLRWKRGGDSDSLMIPNADHRAALAQLLPMVQNAAGGKLHGIGHRVVHGGELFTHATRIDDRVVEAIRATAPLAPLHNPANLQGIEAAMTLFPKLPHVAVFDTAFHQSLPEHAYRYALPEALYREHGVRRYGFHGTSHRYVSHRAAEMAGLAVGDSSWLSAHLGNGSSTCAIVNGQSLDTSMGLTPLEGLVMGTRSGDVDPNLHSHLARTLGWSLERIDSMLNNESGLLGLSDLSNDMRTLEQEREQGHPGAALAIEVFCYRLAKSLAAMSCALPQLDGVIFTGGIGENSPLVRAKTAAHLRLFDLRLDQEANARCVRGVAGPIQAAGHPRVLVIPTNEERQIALDTLALLD</sequence>
<keyword id="KW-0067">ATP-binding</keyword>
<keyword id="KW-0963">Cytoplasm</keyword>
<keyword id="KW-0418">Kinase</keyword>
<keyword id="KW-0460">Magnesium</keyword>
<keyword id="KW-0479">Metal-binding</keyword>
<keyword id="KW-0547">Nucleotide-binding</keyword>
<keyword id="KW-0808">Transferase</keyword>
<protein>
    <recommendedName>
        <fullName evidence="1">Acetate kinase</fullName>
        <ecNumber evidence="1">2.7.2.1</ecNumber>
    </recommendedName>
    <alternativeName>
        <fullName evidence="1">Acetokinase</fullName>
    </alternativeName>
</protein>
<proteinExistence type="inferred from homology"/>
<comment type="function">
    <text evidence="1">Catalyzes the formation of acetyl phosphate from acetate and ATP. Can also catalyze the reverse reaction.</text>
</comment>
<comment type="catalytic activity">
    <reaction evidence="1">
        <text>acetate + ATP = acetyl phosphate + ADP</text>
        <dbReference type="Rhea" id="RHEA:11352"/>
        <dbReference type="ChEBI" id="CHEBI:22191"/>
        <dbReference type="ChEBI" id="CHEBI:30089"/>
        <dbReference type="ChEBI" id="CHEBI:30616"/>
        <dbReference type="ChEBI" id="CHEBI:456216"/>
        <dbReference type="EC" id="2.7.2.1"/>
    </reaction>
</comment>
<comment type="cofactor">
    <cofactor evidence="1">
        <name>Mg(2+)</name>
        <dbReference type="ChEBI" id="CHEBI:18420"/>
    </cofactor>
    <cofactor evidence="1">
        <name>Mn(2+)</name>
        <dbReference type="ChEBI" id="CHEBI:29035"/>
    </cofactor>
    <text evidence="1">Mg(2+). Can also accept Mn(2+).</text>
</comment>
<comment type="pathway">
    <text evidence="1">Metabolic intermediate biosynthesis; acetyl-CoA biosynthesis; acetyl-CoA from acetate: step 1/2.</text>
</comment>
<comment type="subunit">
    <text evidence="1">Homodimer.</text>
</comment>
<comment type="subcellular location">
    <subcellularLocation>
        <location evidence="1">Cytoplasm</location>
    </subcellularLocation>
</comment>
<comment type="similarity">
    <text evidence="1">Belongs to the acetokinase family.</text>
</comment>
<name>ACKA_PSEAB</name>
<reference key="1">
    <citation type="journal article" date="2006" name="Genome Biol.">
        <title>Genomic analysis reveals that Pseudomonas aeruginosa virulence is combinatorial.</title>
        <authorList>
            <person name="Lee D.G."/>
            <person name="Urbach J.M."/>
            <person name="Wu G."/>
            <person name="Liberati N.T."/>
            <person name="Feinbaum R.L."/>
            <person name="Miyata S."/>
            <person name="Diggins L.T."/>
            <person name="He J."/>
            <person name="Saucier M."/>
            <person name="Deziel E."/>
            <person name="Friedman L."/>
            <person name="Li L."/>
            <person name="Grills G."/>
            <person name="Montgomery K."/>
            <person name="Kucherlapati R."/>
            <person name="Rahme L.G."/>
            <person name="Ausubel F.M."/>
        </authorList>
    </citation>
    <scope>NUCLEOTIDE SEQUENCE [LARGE SCALE GENOMIC DNA]</scope>
    <source>
        <strain>UCBPP-PA14</strain>
    </source>
</reference>
<accession>Q02HZ4</accession>
<organism>
    <name type="scientific">Pseudomonas aeruginosa (strain UCBPP-PA14)</name>
    <dbReference type="NCBI Taxonomy" id="208963"/>
    <lineage>
        <taxon>Bacteria</taxon>
        <taxon>Pseudomonadati</taxon>
        <taxon>Pseudomonadota</taxon>
        <taxon>Gammaproteobacteria</taxon>
        <taxon>Pseudomonadales</taxon>
        <taxon>Pseudomonadaceae</taxon>
        <taxon>Pseudomonas</taxon>
    </lineage>
</organism>
<gene>
    <name evidence="1" type="primary">ackA</name>
    <name type="ordered locus">PA14_53470</name>
</gene>
<dbReference type="EC" id="2.7.2.1" evidence="1"/>
<dbReference type="EMBL" id="CP000438">
    <property type="protein sequence ID" value="ABJ09994.1"/>
    <property type="molecule type" value="Genomic_DNA"/>
</dbReference>
<dbReference type="RefSeq" id="WP_003085814.1">
    <property type="nucleotide sequence ID" value="NZ_CP034244.1"/>
</dbReference>
<dbReference type="SMR" id="Q02HZ4"/>
<dbReference type="KEGG" id="pau:PA14_53470"/>
<dbReference type="PseudoCAP" id="PA14_53470"/>
<dbReference type="HOGENOM" id="CLU_020352_0_1_6"/>
<dbReference type="BioCyc" id="PAER208963:G1G74-4498-MONOMER"/>
<dbReference type="UniPathway" id="UPA00340">
    <property type="reaction ID" value="UER00458"/>
</dbReference>
<dbReference type="Proteomes" id="UP000000653">
    <property type="component" value="Chromosome"/>
</dbReference>
<dbReference type="GO" id="GO:0005829">
    <property type="term" value="C:cytosol"/>
    <property type="evidence" value="ECO:0007669"/>
    <property type="project" value="TreeGrafter"/>
</dbReference>
<dbReference type="GO" id="GO:0008776">
    <property type="term" value="F:acetate kinase activity"/>
    <property type="evidence" value="ECO:0007669"/>
    <property type="project" value="UniProtKB-UniRule"/>
</dbReference>
<dbReference type="GO" id="GO:0005524">
    <property type="term" value="F:ATP binding"/>
    <property type="evidence" value="ECO:0007669"/>
    <property type="project" value="UniProtKB-KW"/>
</dbReference>
<dbReference type="GO" id="GO:0000287">
    <property type="term" value="F:magnesium ion binding"/>
    <property type="evidence" value="ECO:0007669"/>
    <property type="project" value="UniProtKB-UniRule"/>
</dbReference>
<dbReference type="GO" id="GO:0006083">
    <property type="term" value="P:acetate metabolic process"/>
    <property type="evidence" value="ECO:0007669"/>
    <property type="project" value="TreeGrafter"/>
</dbReference>
<dbReference type="GO" id="GO:0006085">
    <property type="term" value="P:acetyl-CoA biosynthetic process"/>
    <property type="evidence" value="ECO:0007669"/>
    <property type="project" value="UniProtKB-UniRule"/>
</dbReference>
<dbReference type="CDD" id="cd24010">
    <property type="entry name" value="ASKHA_NBD_AcK_PK"/>
    <property type="match status" value="1"/>
</dbReference>
<dbReference type="Gene3D" id="3.30.420.40">
    <property type="match status" value="2"/>
</dbReference>
<dbReference type="HAMAP" id="MF_00020">
    <property type="entry name" value="Acetate_kinase"/>
    <property type="match status" value="1"/>
</dbReference>
<dbReference type="InterPro" id="IPR004372">
    <property type="entry name" value="Ac/propionate_kinase"/>
</dbReference>
<dbReference type="InterPro" id="IPR000890">
    <property type="entry name" value="Aliphatic_acid_kin_short-chain"/>
</dbReference>
<dbReference type="InterPro" id="IPR023865">
    <property type="entry name" value="Aliphatic_acid_kinase_CS"/>
</dbReference>
<dbReference type="InterPro" id="IPR043129">
    <property type="entry name" value="ATPase_NBD"/>
</dbReference>
<dbReference type="NCBIfam" id="TIGR00016">
    <property type="entry name" value="ackA"/>
    <property type="match status" value="1"/>
</dbReference>
<dbReference type="PANTHER" id="PTHR21060">
    <property type="entry name" value="ACETATE KINASE"/>
    <property type="match status" value="1"/>
</dbReference>
<dbReference type="PANTHER" id="PTHR21060:SF21">
    <property type="entry name" value="ACETATE KINASE"/>
    <property type="match status" value="1"/>
</dbReference>
<dbReference type="Pfam" id="PF00871">
    <property type="entry name" value="Acetate_kinase"/>
    <property type="match status" value="1"/>
</dbReference>
<dbReference type="PIRSF" id="PIRSF000722">
    <property type="entry name" value="Acetate_prop_kin"/>
    <property type="match status" value="1"/>
</dbReference>
<dbReference type="PRINTS" id="PR00471">
    <property type="entry name" value="ACETATEKNASE"/>
</dbReference>
<dbReference type="SUPFAM" id="SSF53067">
    <property type="entry name" value="Actin-like ATPase domain"/>
    <property type="match status" value="2"/>
</dbReference>
<dbReference type="PROSITE" id="PS01075">
    <property type="entry name" value="ACETATE_KINASE_1"/>
    <property type="match status" value="1"/>
</dbReference>